<proteinExistence type="inferred from homology"/>
<organism>
    <name type="scientific">Vibrio campbellii (strain ATCC BAA-1116)</name>
    <dbReference type="NCBI Taxonomy" id="2902295"/>
    <lineage>
        <taxon>Bacteria</taxon>
        <taxon>Pseudomonadati</taxon>
        <taxon>Pseudomonadota</taxon>
        <taxon>Gammaproteobacteria</taxon>
        <taxon>Vibrionales</taxon>
        <taxon>Vibrionaceae</taxon>
        <taxon>Vibrio</taxon>
    </lineage>
</organism>
<reference key="1">
    <citation type="submission" date="2007-08" db="EMBL/GenBank/DDBJ databases">
        <authorList>
            <consortium name="The Vibrio harveyi Genome Sequencing Project"/>
            <person name="Bassler B."/>
            <person name="Clifton S.W."/>
            <person name="Fulton L."/>
            <person name="Delehaunty K."/>
            <person name="Fronick C."/>
            <person name="Harrison M."/>
            <person name="Markivic C."/>
            <person name="Fulton R."/>
            <person name="Tin-Wollam A.-M."/>
            <person name="Shah N."/>
            <person name="Pepin K."/>
            <person name="Nash W."/>
            <person name="Thiruvilangam P."/>
            <person name="Bhonagiri V."/>
            <person name="Waters C."/>
            <person name="Tu K.C."/>
            <person name="Irgon J."/>
            <person name="Wilson R.K."/>
        </authorList>
    </citation>
    <scope>NUCLEOTIDE SEQUENCE [LARGE SCALE GENOMIC DNA]</scope>
    <source>
        <strain>ATCC BAA-1116 / BB120</strain>
    </source>
</reference>
<comment type="function">
    <text evidence="1">Catalyzes the acyloin condensation reaction between C atoms 2 and 3 of pyruvate and glyceraldehyde 3-phosphate to yield 1-deoxy-D-xylulose-5-phosphate (DXP).</text>
</comment>
<comment type="catalytic activity">
    <reaction evidence="1">
        <text>D-glyceraldehyde 3-phosphate + pyruvate + H(+) = 1-deoxy-D-xylulose 5-phosphate + CO2</text>
        <dbReference type="Rhea" id="RHEA:12605"/>
        <dbReference type="ChEBI" id="CHEBI:15361"/>
        <dbReference type="ChEBI" id="CHEBI:15378"/>
        <dbReference type="ChEBI" id="CHEBI:16526"/>
        <dbReference type="ChEBI" id="CHEBI:57792"/>
        <dbReference type="ChEBI" id="CHEBI:59776"/>
        <dbReference type="EC" id="2.2.1.7"/>
    </reaction>
</comment>
<comment type="cofactor">
    <cofactor evidence="1">
        <name>Mg(2+)</name>
        <dbReference type="ChEBI" id="CHEBI:18420"/>
    </cofactor>
    <text evidence="1">Binds 1 Mg(2+) ion per subunit.</text>
</comment>
<comment type="cofactor">
    <cofactor evidence="1">
        <name>thiamine diphosphate</name>
        <dbReference type="ChEBI" id="CHEBI:58937"/>
    </cofactor>
    <text evidence="1">Binds 1 thiamine pyrophosphate per subunit.</text>
</comment>
<comment type="pathway">
    <text evidence="1">Metabolic intermediate biosynthesis; 1-deoxy-D-xylulose 5-phosphate biosynthesis; 1-deoxy-D-xylulose 5-phosphate from D-glyceraldehyde 3-phosphate and pyruvate: step 1/1.</text>
</comment>
<comment type="subunit">
    <text evidence="1">Homodimer.</text>
</comment>
<comment type="similarity">
    <text evidence="1">Belongs to the transketolase family. DXPS subfamily.</text>
</comment>
<accession>A7MYC6</accession>
<evidence type="ECO:0000255" key="1">
    <source>
        <dbReference type="HAMAP-Rule" id="MF_00315"/>
    </source>
</evidence>
<gene>
    <name evidence="1" type="primary">dxs</name>
    <name type="ordered locus">VIBHAR_01173</name>
</gene>
<dbReference type="EC" id="2.2.1.7" evidence="1"/>
<dbReference type="EMBL" id="CP000789">
    <property type="protein sequence ID" value="ABU70163.1"/>
    <property type="molecule type" value="Genomic_DNA"/>
</dbReference>
<dbReference type="RefSeq" id="WP_012127162.1">
    <property type="nucleotide sequence ID" value="NC_009783.1"/>
</dbReference>
<dbReference type="SMR" id="A7MYC6"/>
<dbReference type="KEGG" id="vha:VIBHAR_01173"/>
<dbReference type="PATRIC" id="fig|338187.25.peg.1456"/>
<dbReference type="UniPathway" id="UPA00064">
    <property type="reaction ID" value="UER00091"/>
</dbReference>
<dbReference type="Proteomes" id="UP000008152">
    <property type="component" value="Chromosome I"/>
</dbReference>
<dbReference type="GO" id="GO:0005829">
    <property type="term" value="C:cytosol"/>
    <property type="evidence" value="ECO:0007669"/>
    <property type="project" value="TreeGrafter"/>
</dbReference>
<dbReference type="GO" id="GO:0008661">
    <property type="term" value="F:1-deoxy-D-xylulose-5-phosphate synthase activity"/>
    <property type="evidence" value="ECO:0007669"/>
    <property type="project" value="UniProtKB-UniRule"/>
</dbReference>
<dbReference type="GO" id="GO:0000287">
    <property type="term" value="F:magnesium ion binding"/>
    <property type="evidence" value="ECO:0007669"/>
    <property type="project" value="UniProtKB-UniRule"/>
</dbReference>
<dbReference type="GO" id="GO:0030976">
    <property type="term" value="F:thiamine pyrophosphate binding"/>
    <property type="evidence" value="ECO:0007669"/>
    <property type="project" value="UniProtKB-UniRule"/>
</dbReference>
<dbReference type="GO" id="GO:0052865">
    <property type="term" value="P:1-deoxy-D-xylulose 5-phosphate biosynthetic process"/>
    <property type="evidence" value="ECO:0007669"/>
    <property type="project" value="UniProtKB-UniPathway"/>
</dbReference>
<dbReference type="GO" id="GO:0019288">
    <property type="term" value="P:isopentenyl diphosphate biosynthetic process, methylerythritol 4-phosphate pathway"/>
    <property type="evidence" value="ECO:0007669"/>
    <property type="project" value="TreeGrafter"/>
</dbReference>
<dbReference type="GO" id="GO:0016114">
    <property type="term" value="P:terpenoid biosynthetic process"/>
    <property type="evidence" value="ECO:0007669"/>
    <property type="project" value="UniProtKB-UniRule"/>
</dbReference>
<dbReference type="GO" id="GO:0009228">
    <property type="term" value="P:thiamine biosynthetic process"/>
    <property type="evidence" value="ECO:0007669"/>
    <property type="project" value="UniProtKB-UniRule"/>
</dbReference>
<dbReference type="CDD" id="cd02007">
    <property type="entry name" value="TPP_DXS"/>
    <property type="match status" value="1"/>
</dbReference>
<dbReference type="CDD" id="cd07033">
    <property type="entry name" value="TPP_PYR_DXS_TK_like"/>
    <property type="match status" value="1"/>
</dbReference>
<dbReference type="FunFam" id="3.40.50.920:FF:000002">
    <property type="entry name" value="1-deoxy-D-xylulose-5-phosphate synthase"/>
    <property type="match status" value="1"/>
</dbReference>
<dbReference type="FunFam" id="3.40.50.970:FF:000005">
    <property type="entry name" value="1-deoxy-D-xylulose-5-phosphate synthase"/>
    <property type="match status" value="1"/>
</dbReference>
<dbReference type="Gene3D" id="3.40.50.920">
    <property type="match status" value="1"/>
</dbReference>
<dbReference type="Gene3D" id="3.40.50.970">
    <property type="match status" value="2"/>
</dbReference>
<dbReference type="HAMAP" id="MF_00315">
    <property type="entry name" value="DXP_synth"/>
    <property type="match status" value="1"/>
</dbReference>
<dbReference type="InterPro" id="IPR005477">
    <property type="entry name" value="Dxylulose-5-P_synthase"/>
</dbReference>
<dbReference type="InterPro" id="IPR029061">
    <property type="entry name" value="THDP-binding"/>
</dbReference>
<dbReference type="InterPro" id="IPR009014">
    <property type="entry name" value="Transketo_C/PFOR_II"/>
</dbReference>
<dbReference type="InterPro" id="IPR005475">
    <property type="entry name" value="Transketolase-like_Pyr-bd"/>
</dbReference>
<dbReference type="InterPro" id="IPR020826">
    <property type="entry name" value="Transketolase_BS"/>
</dbReference>
<dbReference type="InterPro" id="IPR033248">
    <property type="entry name" value="Transketolase_C"/>
</dbReference>
<dbReference type="InterPro" id="IPR049557">
    <property type="entry name" value="Transketolase_CS"/>
</dbReference>
<dbReference type="NCBIfam" id="TIGR00204">
    <property type="entry name" value="dxs"/>
    <property type="match status" value="1"/>
</dbReference>
<dbReference type="NCBIfam" id="NF003933">
    <property type="entry name" value="PRK05444.2-2"/>
    <property type="match status" value="1"/>
</dbReference>
<dbReference type="PANTHER" id="PTHR43322">
    <property type="entry name" value="1-D-DEOXYXYLULOSE 5-PHOSPHATE SYNTHASE-RELATED"/>
    <property type="match status" value="1"/>
</dbReference>
<dbReference type="PANTHER" id="PTHR43322:SF5">
    <property type="entry name" value="1-DEOXY-D-XYLULOSE-5-PHOSPHATE SYNTHASE, CHLOROPLASTIC"/>
    <property type="match status" value="1"/>
</dbReference>
<dbReference type="Pfam" id="PF13292">
    <property type="entry name" value="DXP_synthase_N"/>
    <property type="match status" value="1"/>
</dbReference>
<dbReference type="Pfam" id="PF02779">
    <property type="entry name" value="Transket_pyr"/>
    <property type="match status" value="1"/>
</dbReference>
<dbReference type="Pfam" id="PF02780">
    <property type="entry name" value="Transketolase_C"/>
    <property type="match status" value="1"/>
</dbReference>
<dbReference type="SMART" id="SM00861">
    <property type="entry name" value="Transket_pyr"/>
    <property type="match status" value="1"/>
</dbReference>
<dbReference type="SUPFAM" id="SSF52518">
    <property type="entry name" value="Thiamin diphosphate-binding fold (THDP-binding)"/>
    <property type="match status" value="2"/>
</dbReference>
<dbReference type="SUPFAM" id="SSF52922">
    <property type="entry name" value="TK C-terminal domain-like"/>
    <property type="match status" value="1"/>
</dbReference>
<dbReference type="PROSITE" id="PS00801">
    <property type="entry name" value="TRANSKETOLASE_1"/>
    <property type="match status" value="1"/>
</dbReference>
<dbReference type="PROSITE" id="PS00802">
    <property type="entry name" value="TRANSKETOLASE_2"/>
    <property type="match status" value="1"/>
</dbReference>
<keyword id="KW-0414">Isoprene biosynthesis</keyword>
<keyword id="KW-0460">Magnesium</keyword>
<keyword id="KW-0479">Metal-binding</keyword>
<keyword id="KW-0784">Thiamine biosynthesis</keyword>
<keyword id="KW-0786">Thiamine pyrophosphate</keyword>
<keyword id="KW-0808">Transferase</keyword>
<name>DXS_VIBC1</name>
<protein>
    <recommendedName>
        <fullName evidence="1">1-deoxy-D-xylulose-5-phosphate synthase</fullName>
        <ecNumber evidence="1">2.2.1.7</ecNumber>
    </recommendedName>
    <alternativeName>
        <fullName evidence="1">1-deoxyxylulose-5-phosphate synthase</fullName>
        <shortName evidence="1">DXP synthase</shortName>
        <shortName evidence="1">DXPS</shortName>
    </alternativeName>
</protein>
<feature type="chain" id="PRO_1000019091" description="1-deoxy-D-xylulose-5-phosphate synthase">
    <location>
        <begin position="1"/>
        <end position="621"/>
    </location>
</feature>
<feature type="binding site" evidence="1">
    <location>
        <position position="80"/>
    </location>
    <ligand>
        <name>thiamine diphosphate</name>
        <dbReference type="ChEBI" id="CHEBI:58937"/>
    </ligand>
</feature>
<feature type="binding site" evidence="1">
    <location>
        <begin position="121"/>
        <end position="123"/>
    </location>
    <ligand>
        <name>thiamine diphosphate</name>
        <dbReference type="ChEBI" id="CHEBI:58937"/>
    </ligand>
</feature>
<feature type="binding site" evidence="1">
    <location>
        <position position="152"/>
    </location>
    <ligand>
        <name>Mg(2+)</name>
        <dbReference type="ChEBI" id="CHEBI:18420"/>
    </ligand>
</feature>
<feature type="binding site" evidence="1">
    <location>
        <begin position="153"/>
        <end position="154"/>
    </location>
    <ligand>
        <name>thiamine diphosphate</name>
        <dbReference type="ChEBI" id="CHEBI:58937"/>
    </ligand>
</feature>
<feature type="binding site" evidence="1">
    <location>
        <position position="181"/>
    </location>
    <ligand>
        <name>Mg(2+)</name>
        <dbReference type="ChEBI" id="CHEBI:18420"/>
    </ligand>
</feature>
<feature type="binding site" evidence="1">
    <location>
        <position position="181"/>
    </location>
    <ligand>
        <name>thiamine diphosphate</name>
        <dbReference type="ChEBI" id="CHEBI:58937"/>
    </ligand>
</feature>
<feature type="binding site" evidence="1">
    <location>
        <position position="288"/>
    </location>
    <ligand>
        <name>thiamine diphosphate</name>
        <dbReference type="ChEBI" id="CHEBI:58937"/>
    </ligand>
</feature>
<feature type="binding site" evidence="1">
    <location>
        <position position="370"/>
    </location>
    <ligand>
        <name>thiamine diphosphate</name>
        <dbReference type="ChEBI" id="CHEBI:58937"/>
    </ligand>
</feature>
<sequence>MTLDISKYPTLALANTPEELRLLPKETLPTLCDELRTYLLNSVSQSSGHLASGLGTVELTVALHYVYNTPVDQLIWDVGHQAYPHKILTGRRDQMPTIRQKDGLHPFPWREESEYDTLSVGHSSTSISAGLGMAISAQKEGEGRKVVSVIGDGAITAGMAFEAMNHAGDVHPDMLVILNDNEMSISENVGALNNHLAKVLSGSLYTSIREGGKKVLSGVPPIKELVRRTEEHLKGMVVPGTLFEELGFNYIGPIDGHDVNELVKTLKNMRELKGPQFLHIMTKKGKGYEPAEKDPIGYHAVPKFAPSNNSLPKSSGGKPNFSKIFGDFLCDMAAQDPKLMAITPAMREGSGMVRFSKEYPEQYFDVAIAEQHAVTLATGMAIAGDHPIVAIYSTFLQRGYDQLIHDVAIMDLPVMFAIDRAGLVGADGQTHQGAFDLSFMRCIPNMVIMAPSDENECRQMLYTGHKHTGPSAVRYPRGSGMGTDIEKDFTALEIGKGRIVRKGEKVAILSFGTFLGNALEAAENLNATVADMRFVKPLDEALIRQLAAEHDVLVTLEENAIAGGAGAGVIEFMMQDKIIKPVLNLGLPDRFVPQGTQDELHEDLGLDAKGIEKSINDYLAK</sequence>